<proteinExistence type="inferred from homology"/>
<feature type="chain" id="PRO_0000275957" description="Photosystem I P700 chlorophyll a apoprotein A1">
    <location>
        <begin position="1"/>
        <end position="750"/>
    </location>
</feature>
<feature type="transmembrane region" description="Helical; Name=I" evidence="1">
    <location>
        <begin position="70"/>
        <end position="93"/>
    </location>
</feature>
<feature type="transmembrane region" description="Helical; Name=II" evidence="1">
    <location>
        <begin position="156"/>
        <end position="179"/>
    </location>
</feature>
<feature type="transmembrane region" description="Helical; Name=III" evidence="1">
    <location>
        <begin position="195"/>
        <end position="219"/>
    </location>
</feature>
<feature type="transmembrane region" description="Helical; Name=IV" evidence="1">
    <location>
        <begin position="291"/>
        <end position="309"/>
    </location>
</feature>
<feature type="transmembrane region" description="Helical; Name=V" evidence="1">
    <location>
        <begin position="346"/>
        <end position="369"/>
    </location>
</feature>
<feature type="transmembrane region" description="Helical; Name=VI" evidence="1">
    <location>
        <begin position="385"/>
        <end position="411"/>
    </location>
</feature>
<feature type="transmembrane region" description="Helical; Name=VII" evidence="1">
    <location>
        <begin position="433"/>
        <end position="455"/>
    </location>
</feature>
<feature type="transmembrane region" description="Helical; Name=VIII" evidence="1">
    <location>
        <begin position="531"/>
        <end position="549"/>
    </location>
</feature>
<feature type="transmembrane region" description="Helical; Name=IX" evidence="1">
    <location>
        <begin position="589"/>
        <end position="610"/>
    </location>
</feature>
<feature type="transmembrane region" description="Helical; Name=X" evidence="1">
    <location>
        <begin position="664"/>
        <end position="686"/>
    </location>
</feature>
<feature type="transmembrane region" description="Helical; Name=XI" evidence="1">
    <location>
        <begin position="724"/>
        <end position="744"/>
    </location>
</feature>
<feature type="binding site" evidence="1">
    <location>
        <position position="573"/>
    </location>
    <ligand>
        <name>[4Fe-4S] cluster</name>
        <dbReference type="ChEBI" id="CHEBI:49883"/>
        <note>ligand shared between dimeric partners</note>
    </ligand>
</feature>
<feature type="binding site" evidence="1">
    <location>
        <position position="582"/>
    </location>
    <ligand>
        <name>[4Fe-4S] cluster</name>
        <dbReference type="ChEBI" id="CHEBI:49883"/>
        <note>ligand shared between dimeric partners</note>
    </ligand>
</feature>
<feature type="binding site" description="axial binding residue" evidence="1">
    <location>
        <position position="675"/>
    </location>
    <ligand>
        <name>chlorophyll a'</name>
        <dbReference type="ChEBI" id="CHEBI:189419"/>
        <label>A1</label>
    </ligand>
    <ligandPart>
        <name>Mg</name>
        <dbReference type="ChEBI" id="CHEBI:25107"/>
    </ligandPart>
</feature>
<feature type="binding site" description="axial binding residue" evidence="1">
    <location>
        <position position="683"/>
    </location>
    <ligand>
        <name>chlorophyll a</name>
        <dbReference type="ChEBI" id="CHEBI:58416"/>
        <label>A3</label>
    </ligand>
    <ligandPart>
        <name>Mg</name>
        <dbReference type="ChEBI" id="CHEBI:25107"/>
    </ligandPart>
</feature>
<feature type="binding site" evidence="1">
    <location>
        <position position="691"/>
    </location>
    <ligand>
        <name>chlorophyll a</name>
        <dbReference type="ChEBI" id="CHEBI:58416"/>
        <label>A3</label>
    </ligand>
</feature>
<feature type="binding site" evidence="1">
    <location>
        <position position="692"/>
    </location>
    <ligand>
        <name>phylloquinone</name>
        <dbReference type="ChEBI" id="CHEBI:18067"/>
        <label>A</label>
    </ligand>
</feature>
<gene>
    <name evidence="1" type="primary">psaA</name>
</gene>
<keyword id="KW-0004">4Fe-4S</keyword>
<keyword id="KW-0148">Chlorophyll</keyword>
<keyword id="KW-0150">Chloroplast</keyword>
<keyword id="KW-0157">Chromophore</keyword>
<keyword id="KW-0249">Electron transport</keyword>
<keyword id="KW-0408">Iron</keyword>
<keyword id="KW-0411">Iron-sulfur</keyword>
<keyword id="KW-0460">Magnesium</keyword>
<keyword id="KW-0472">Membrane</keyword>
<keyword id="KW-0479">Metal-binding</keyword>
<keyword id="KW-0560">Oxidoreductase</keyword>
<keyword id="KW-0602">Photosynthesis</keyword>
<keyword id="KW-0603">Photosystem I</keyword>
<keyword id="KW-0934">Plastid</keyword>
<keyword id="KW-0793">Thylakoid</keyword>
<keyword id="KW-0812">Transmembrane</keyword>
<keyword id="KW-1133">Transmembrane helix</keyword>
<keyword id="KW-0813">Transport</keyword>
<sequence length="750" mass="83241">MIIRSPEPEVKIVVDRNPIKTSFEEWARPGHFSRTIAKGPDTTTWIWNLHADAHDFDSHTSDLEEISRKVFSAHFGQLSIIFLWLSGMYFHGARFSNYEAWLSDPTHIAPSAQVVWPIVGQEILNGDVGGGFRGIQITSGFFQIWRASGITSELQLYCTAIGALVFASLMLFAGWFHYHKAAPKLAWFQDVESMLNHHLAGLLGLGSLSWAGHQIHVSLPINQFLDAGVDPKEIPLPHEFILNRDLLAQLYPSFAEGATPFFTLNWAKYAEFLSFRGGLDPITGGLWLSDIAHHHLAIAILFLIAGHMYRTNWAIGHGLKDILEAHKGPFTGQGHKGLYEILTTSWHAQLSLNLAMLGSLTIVVAHHMYSMPPYPYLAIDYGTQLSLFTHHMWIGGFLIVGAAAHAAIFMVRDYDPTTRYNDLLDRVLRHRDAIISHLNWACIFLGFHSFGLYIHNDTMSALGRPQDMFSDTAIQLQPIFAQWVQNTHALAPNVTAPGATTSTSLIWGGGELVAVGGKVALLPIPLGTADFLVHHIHAFTIHVTVLILLKGVLFARSSRLIPDKANLGFRFPCDGPGRGGTCQVSAWDHVFLGLFWMYNAISVVIFHFSWKMQSDVWGTISDQGVVTHITGGNFAQSSITINGWLRDFLWAQASQVIQSYGSSLSAYGLFFLGAHFVWAFSLMFLFSGRGYWQELIESIVWAHNKLKVAPATQPRALSIVQGRAVGVTHYLLGGIATTWAFFLARIIAVG</sequence>
<name>PSAA_PHAAO</name>
<evidence type="ECO:0000255" key="1">
    <source>
        <dbReference type="HAMAP-Rule" id="MF_00458"/>
    </source>
</evidence>
<reference key="1">
    <citation type="journal article" date="2006" name="Mol. Biol. Evol.">
        <title>The chloroplast genome of Phalaenopsis aphrodite (Orchidaceae): comparative analysis of evolutionary rate with that of grasses and its phylogenetic implications.</title>
        <authorList>
            <person name="Chang C.-C."/>
            <person name="Lin H.-C."/>
            <person name="Lin I.-P."/>
            <person name="Chow T.-Y."/>
            <person name="Chen H.-H."/>
            <person name="Chen W.-H."/>
            <person name="Cheng C.-H."/>
            <person name="Lin C.-Y."/>
            <person name="Liu S.-M."/>
            <person name="Chang C.-C."/>
            <person name="Chaw S.-M."/>
        </authorList>
    </citation>
    <scope>NUCLEOTIDE SEQUENCE [LARGE SCALE GENOMIC DNA]</scope>
    <source>
        <strain>cv. Taisugar TS-97</strain>
    </source>
</reference>
<dbReference type="EC" id="1.97.1.12" evidence="1"/>
<dbReference type="EMBL" id="AY916449">
    <property type="protein sequence ID" value="AAW82503.1"/>
    <property type="molecule type" value="Genomic_DNA"/>
</dbReference>
<dbReference type="RefSeq" id="YP_358578.1">
    <property type="nucleotide sequence ID" value="NC_007499.1"/>
</dbReference>
<dbReference type="SMR" id="Q3BAP0"/>
<dbReference type="GeneID" id="3741676"/>
<dbReference type="GO" id="GO:0009535">
    <property type="term" value="C:chloroplast thylakoid membrane"/>
    <property type="evidence" value="ECO:0007669"/>
    <property type="project" value="UniProtKB-SubCell"/>
</dbReference>
<dbReference type="GO" id="GO:0009522">
    <property type="term" value="C:photosystem I"/>
    <property type="evidence" value="ECO:0007669"/>
    <property type="project" value="UniProtKB-KW"/>
</dbReference>
<dbReference type="GO" id="GO:0051539">
    <property type="term" value="F:4 iron, 4 sulfur cluster binding"/>
    <property type="evidence" value="ECO:0007669"/>
    <property type="project" value="UniProtKB-KW"/>
</dbReference>
<dbReference type="GO" id="GO:0016168">
    <property type="term" value="F:chlorophyll binding"/>
    <property type="evidence" value="ECO:0007669"/>
    <property type="project" value="UniProtKB-KW"/>
</dbReference>
<dbReference type="GO" id="GO:0009055">
    <property type="term" value="F:electron transfer activity"/>
    <property type="evidence" value="ECO:0007669"/>
    <property type="project" value="UniProtKB-UniRule"/>
</dbReference>
<dbReference type="GO" id="GO:0000287">
    <property type="term" value="F:magnesium ion binding"/>
    <property type="evidence" value="ECO:0007669"/>
    <property type="project" value="UniProtKB-UniRule"/>
</dbReference>
<dbReference type="GO" id="GO:0016491">
    <property type="term" value="F:oxidoreductase activity"/>
    <property type="evidence" value="ECO:0007669"/>
    <property type="project" value="UniProtKB-KW"/>
</dbReference>
<dbReference type="GO" id="GO:0015979">
    <property type="term" value="P:photosynthesis"/>
    <property type="evidence" value="ECO:0007669"/>
    <property type="project" value="UniProtKB-UniRule"/>
</dbReference>
<dbReference type="FunFam" id="1.20.1130.10:FF:000001">
    <property type="entry name" value="Photosystem I P700 chlorophyll a apoprotein A2"/>
    <property type="match status" value="1"/>
</dbReference>
<dbReference type="Gene3D" id="1.20.1130.10">
    <property type="entry name" value="Photosystem I PsaA/PsaB"/>
    <property type="match status" value="1"/>
</dbReference>
<dbReference type="HAMAP" id="MF_00458">
    <property type="entry name" value="PSI_PsaA"/>
    <property type="match status" value="1"/>
</dbReference>
<dbReference type="InterPro" id="IPR006243">
    <property type="entry name" value="PSI_PsaA"/>
</dbReference>
<dbReference type="InterPro" id="IPR001280">
    <property type="entry name" value="PSI_PsaA/B"/>
</dbReference>
<dbReference type="InterPro" id="IPR020586">
    <property type="entry name" value="PSI_PsaA/B_CS"/>
</dbReference>
<dbReference type="InterPro" id="IPR036408">
    <property type="entry name" value="PSI_PsaA/B_sf"/>
</dbReference>
<dbReference type="NCBIfam" id="TIGR01335">
    <property type="entry name" value="psaA"/>
    <property type="match status" value="1"/>
</dbReference>
<dbReference type="PANTHER" id="PTHR30128">
    <property type="entry name" value="OUTER MEMBRANE PROTEIN, OMPA-RELATED"/>
    <property type="match status" value="1"/>
</dbReference>
<dbReference type="PANTHER" id="PTHR30128:SF19">
    <property type="entry name" value="PHOTOSYSTEM I P700 CHLOROPHYLL A APOPROTEIN A1-RELATED"/>
    <property type="match status" value="1"/>
</dbReference>
<dbReference type="Pfam" id="PF00223">
    <property type="entry name" value="PsaA_PsaB"/>
    <property type="match status" value="1"/>
</dbReference>
<dbReference type="PIRSF" id="PIRSF002905">
    <property type="entry name" value="PSI_A"/>
    <property type="match status" value="1"/>
</dbReference>
<dbReference type="PRINTS" id="PR00257">
    <property type="entry name" value="PHOTSYSPSAAB"/>
</dbReference>
<dbReference type="SUPFAM" id="SSF81558">
    <property type="entry name" value="Photosystem I subunits PsaA/PsaB"/>
    <property type="match status" value="1"/>
</dbReference>
<dbReference type="PROSITE" id="PS00419">
    <property type="entry name" value="PHOTOSYSTEM_I_PSAAB"/>
    <property type="match status" value="1"/>
</dbReference>
<organism>
    <name type="scientific">Phalaenopsis aphrodite subsp. formosana</name>
    <name type="common">Moth orchid</name>
    <dbReference type="NCBI Taxonomy" id="308872"/>
    <lineage>
        <taxon>Eukaryota</taxon>
        <taxon>Viridiplantae</taxon>
        <taxon>Streptophyta</taxon>
        <taxon>Embryophyta</taxon>
        <taxon>Tracheophyta</taxon>
        <taxon>Spermatophyta</taxon>
        <taxon>Magnoliopsida</taxon>
        <taxon>Liliopsida</taxon>
        <taxon>Asparagales</taxon>
        <taxon>Orchidaceae</taxon>
        <taxon>Epidendroideae</taxon>
        <taxon>Vandeae</taxon>
        <taxon>Aeridinae</taxon>
        <taxon>Phalaenopsis</taxon>
    </lineage>
</organism>
<protein>
    <recommendedName>
        <fullName evidence="1">Photosystem I P700 chlorophyll a apoprotein A1</fullName>
        <ecNumber evidence="1">1.97.1.12</ecNumber>
    </recommendedName>
    <alternativeName>
        <fullName evidence="1">PSI-A</fullName>
    </alternativeName>
    <alternativeName>
        <fullName evidence="1">PsaA</fullName>
    </alternativeName>
</protein>
<geneLocation type="chloroplast"/>
<comment type="function">
    <text>PsaA and PsaB bind P700, the primary electron donor of photosystem I (PSI), as well as the electron acceptors A0, A1 and FX. PSI is a plastocyanin-ferredoxin oxidoreductase, converting photonic excitation into a charge separation, which transfers an electron from the donor P700 chlorophyll pair to the spectroscopically characterized acceptors A0, A1, FX, FA and FB in turn. Oxidized P700 is reduced on the lumenal side of the thylakoid membrane by plastocyanin.</text>
</comment>
<comment type="catalytic activity">
    <reaction evidence="1">
        <text>reduced [plastocyanin] + hnu + oxidized [2Fe-2S]-[ferredoxin] = oxidized [plastocyanin] + reduced [2Fe-2S]-[ferredoxin]</text>
        <dbReference type="Rhea" id="RHEA:30407"/>
        <dbReference type="Rhea" id="RHEA-COMP:10000"/>
        <dbReference type="Rhea" id="RHEA-COMP:10001"/>
        <dbReference type="Rhea" id="RHEA-COMP:10039"/>
        <dbReference type="Rhea" id="RHEA-COMP:10040"/>
        <dbReference type="ChEBI" id="CHEBI:29036"/>
        <dbReference type="ChEBI" id="CHEBI:30212"/>
        <dbReference type="ChEBI" id="CHEBI:33737"/>
        <dbReference type="ChEBI" id="CHEBI:33738"/>
        <dbReference type="ChEBI" id="CHEBI:49552"/>
        <dbReference type="EC" id="1.97.1.12"/>
    </reaction>
</comment>
<comment type="cofactor">
    <text evidence="1">P700 is a chlorophyll a/chlorophyll a' dimer, A0 is one or more chlorophyll a, A1 is one or both phylloquinones and FX is a shared 4Fe-4S iron-sulfur center.</text>
</comment>
<comment type="subunit">
    <text evidence="1">The PsaA/B heterodimer binds the P700 chlorophyll special pair and subsequent electron acceptors. PSI consists of a core antenna complex that captures photons, and an electron transfer chain that converts photonic excitation into a charge separation. The eukaryotic PSI reaction center is composed of at least 11 subunits.</text>
</comment>
<comment type="subcellular location">
    <subcellularLocation>
        <location evidence="1">Plastid</location>
        <location evidence="1">Chloroplast thylakoid membrane</location>
        <topology evidence="1">Multi-pass membrane protein</topology>
    </subcellularLocation>
</comment>
<comment type="similarity">
    <text evidence="1">Belongs to the PsaA/PsaB family.</text>
</comment>
<accession>Q3BAP0</accession>